<dbReference type="EMBL" id="AE000512">
    <property type="protein sequence ID" value="AAD36262.1"/>
    <property type="molecule type" value="Genomic_DNA"/>
</dbReference>
<dbReference type="PIR" id="A72285">
    <property type="entry name" value="A72285"/>
</dbReference>
<dbReference type="RefSeq" id="NP_228992.1">
    <property type="nucleotide sequence ID" value="NC_000853.1"/>
</dbReference>
<dbReference type="SMR" id="Q9X0R9"/>
<dbReference type="FunCoup" id="Q9X0R9">
    <property type="interactions" value="340"/>
</dbReference>
<dbReference type="STRING" id="243274.TM_1187"/>
<dbReference type="PaxDb" id="243274-THEMA_08400"/>
<dbReference type="DNASU" id="898298"/>
<dbReference type="EnsemblBacteria" id="AAD36262">
    <property type="protein sequence ID" value="AAD36262"/>
    <property type="gene ID" value="TM_1187"/>
</dbReference>
<dbReference type="KEGG" id="tma:TM1187"/>
<dbReference type="KEGG" id="tmi:THEMA_08400"/>
<dbReference type="PATRIC" id="fig|243274.18.peg.1625"/>
<dbReference type="eggNOG" id="COG0628">
    <property type="taxonomic scope" value="Bacteria"/>
</dbReference>
<dbReference type="InParanoid" id="Q9X0R9"/>
<dbReference type="OrthoDB" id="41658at2"/>
<dbReference type="Proteomes" id="UP000008183">
    <property type="component" value="Chromosome"/>
</dbReference>
<dbReference type="GO" id="GO:0005886">
    <property type="term" value="C:plasma membrane"/>
    <property type="evidence" value="ECO:0007669"/>
    <property type="project" value="UniProtKB-SubCell"/>
</dbReference>
<dbReference type="GO" id="GO:0055085">
    <property type="term" value="P:transmembrane transport"/>
    <property type="evidence" value="ECO:0000318"/>
    <property type="project" value="GO_Central"/>
</dbReference>
<dbReference type="InterPro" id="IPR002549">
    <property type="entry name" value="AI-2E-like"/>
</dbReference>
<dbReference type="PANTHER" id="PTHR21716:SF53">
    <property type="entry name" value="PERMEASE PERM-RELATED"/>
    <property type="match status" value="1"/>
</dbReference>
<dbReference type="PANTHER" id="PTHR21716">
    <property type="entry name" value="TRANSMEMBRANE PROTEIN"/>
    <property type="match status" value="1"/>
</dbReference>
<dbReference type="Pfam" id="PF01594">
    <property type="entry name" value="AI-2E_transport"/>
    <property type="match status" value="1"/>
</dbReference>
<feature type="chain" id="PRO_0000148322" description="Putative transport protein TM_1187">
    <location>
        <begin position="1"/>
        <end position="324"/>
    </location>
</feature>
<feature type="transmembrane region" description="Helical" evidence="1">
    <location>
        <begin position="12"/>
        <end position="32"/>
    </location>
</feature>
<feature type="transmembrane region" description="Helical" evidence="1">
    <location>
        <begin position="62"/>
        <end position="82"/>
    </location>
</feature>
<feature type="transmembrane region" description="Helical" evidence="1">
    <location>
        <begin position="105"/>
        <end position="125"/>
    </location>
</feature>
<feature type="transmembrane region" description="Helical" evidence="1">
    <location>
        <begin position="131"/>
        <end position="151"/>
    </location>
</feature>
<feature type="transmembrane region" description="Helical" evidence="1">
    <location>
        <begin position="190"/>
        <end position="210"/>
    </location>
</feature>
<feature type="transmembrane region" description="Helical" evidence="1">
    <location>
        <begin position="227"/>
        <end position="247"/>
    </location>
</feature>
<feature type="transmembrane region" description="Helical" evidence="1">
    <location>
        <begin position="252"/>
        <end position="272"/>
    </location>
</feature>
<feature type="transmembrane region" description="Helical" evidence="1">
    <location>
        <begin position="285"/>
        <end position="305"/>
    </location>
</feature>
<gene>
    <name type="ordered locus">TM_1187</name>
</gene>
<evidence type="ECO:0000255" key="1"/>
<evidence type="ECO:0000305" key="2"/>
<protein>
    <recommendedName>
        <fullName>Putative transport protein TM_1187</fullName>
    </recommendedName>
</protein>
<keyword id="KW-1003">Cell membrane</keyword>
<keyword id="KW-0472">Membrane</keyword>
<keyword id="KW-1185">Reference proteome</keyword>
<keyword id="KW-0812">Transmembrane</keyword>
<keyword id="KW-1133">Transmembrane helix</keyword>
<keyword id="KW-0813">Transport</keyword>
<accession>Q9X0R9</accession>
<name>Y1187_THEMA</name>
<sequence length="324" mass="36043">MKNLKNKHFALLYLVLFLVLAKLSPFIITALIMGLYLSIIIDYVARFLEVFIKKPRVLPRVISNVLVFLTIAYSAVNFFPVIVREAQKVFSEIDRIRSGLENIDIPGWLSSILSSISASFSEGALSLVNKIVGYVPSFITAAILIVITAFIVSSLKRLIKENVHYLFPTNPSDGKEFLKTTYTEFERFVGGQVLVAIFVGLFVGFGAFIFKIPSAFFLGMLAFVTDFVPYLGVVISAIPLLMLAFSVHGLSGLLIGTIILVAANQLEMWVLAPKIQSNTLNVHWFIILIMILILGDLFSFGGVLIALPFLIFLKNFWKQYVMGG</sequence>
<reference key="1">
    <citation type="journal article" date="1999" name="Nature">
        <title>Evidence for lateral gene transfer between Archaea and Bacteria from genome sequence of Thermotoga maritima.</title>
        <authorList>
            <person name="Nelson K.E."/>
            <person name="Clayton R.A."/>
            <person name="Gill S.R."/>
            <person name="Gwinn M.L."/>
            <person name="Dodson R.J."/>
            <person name="Haft D.H."/>
            <person name="Hickey E.K."/>
            <person name="Peterson J.D."/>
            <person name="Nelson W.C."/>
            <person name="Ketchum K.A."/>
            <person name="McDonald L.A."/>
            <person name="Utterback T.R."/>
            <person name="Malek J.A."/>
            <person name="Linher K.D."/>
            <person name="Garrett M.M."/>
            <person name="Stewart A.M."/>
            <person name="Cotton M.D."/>
            <person name="Pratt M.S."/>
            <person name="Phillips C.A."/>
            <person name="Richardson D.L."/>
            <person name="Heidelberg J.F."/>
            <person name="Sutton G.G."/>
            <person name="Fleischmann R.D."/>
            <person name="Eisen J.A."/>
            <person name="White O."/>
            <person name="Salzberg S.L."/>
            <person name="Smith H.O."/>
            <person name="Venter J.C."/>
            <person name="Fraser C.M."/>
        </authorList>
    </citation>
    <scope>NUCLEOTIDE SEQUENCE [LARGE SCALE GENOMIC DNA]</scope>
    <source>
        <strain>ATCC 43589 / DSM 3109 / JCM 10099 / NBRC 100826 / MSB8</strain>
    </source>
</reference>
<proteinExistence type="inferred from homology"/>
<comment type="subcellular location">
    <subcellularLocation>
        <location evidence="2">Cell membrane</location>
        <topology evidence="2">Multi-pass membrane protein</topology>
    </subcellularLocation>
</comment>
<comment type="similarity">
    <text evidence="2">Belongs to the autoinducer-2 exporter (AI-2E) (TC 2.A.86) family.</text>
</comment>
<organism>
    <name type="scientific">Thermotoga maritima (strain ATCC 43589 / DSM 3109 / JCM 10099 / NBRC 100826 / MSB8)</name>
    <dbReference type="NCBI Taxonomy" id="243274"/>
    <lineage>
        <taxon>Bacteria</taxon>
        <taxon>Thermotogati</taxon>
        <taxon>Thermotogota</taxon>
        <taxon>Thermotogae</taxon>
        <taxon>Thermotogales</taxon>
        <taxon>Thermotogaceae</taxon>
        <taxon>Thermotoga</taxon>
    </lineage>
</organism>